<reference key="1">
    <citation type="journal article" date="1992" name="Curr. Genet.">
        <title>Mitochondrial DNA sequence analysis of the cytochrome oxidase subunit I and II genes, the ATPase9 gene, the NADH dehydrogenase ND4L and ND5 gene complex, and the glutaminyl, methionyl and arginyl tRNA genes from Trichophyton rubrum.</title>
        <authorList>
            <person name="de Bievre C."/>
            <person name="Dujon B."/>
        </authorList>
    </citation>
    <scope>NUCLEOTIDE SEQUENCE [GENOMIC DNA]</scope>
    <source>
        <strain>IP 1817.89</strain>
    </source>
</reference>
<proteinExistence type="inferred from homology"/>
<geneLocation type="mitochondrion"/>
<accession>Q01555</accession>
<protein>
    <recommendedName>
        <fullName>Cytochrome c oxidase subunit 1</fullName>
        <ecNumber>7.1.1.9</ecNumber>
    </recommendedName>
    <alternativeName>
        <fullName>Cytochrome c oxidase polypeptide I</fullName>
    </alternativeName>
</protein>
<organism>
    <name type="scientific">Trichophyton rubrum</name>
    <name type="common">Athlete's foot fungus</name>
    <name type="synonym">Epidermophyton rubrum</name>
    <dbReference type="NCBI Taxonomy" id="5551"/>
    <lineage>
        <taxon>Eukaryota</taxon>
        <taxon>Fungi</taxon>
        <taxon>Dikarya</taxon>
        <taxon>Ascomycota</taxon>
        <taxon>Pezizomycotina</taxon>
        <taxon>Eurotiomycetes</taxon>
        <taxon>Eurotiomycetidae</taxon>
        <taxon>Onygenales</taxon>
        <taxon>Arthrodermataceae</taxon>
        <taxon>Trichophyton</taxon>
    </lineage>
</organism>
<sequence>MWKERWFLSTNAKDIGTLYLMFRYFSGLVGTAFSVLIRLELSAPGVQYIADNQLYNSIITAHAILMIFFMVMPALIGGFGNFLLPLLVGGPDMAFPRLNNISFWLLIPSLLLFVFASIIENGAGTGWTLYPPLASIQSHSGPSVDLAIFGLHLSGISSLLGAMNFITTIINMRSPGIRLHKLALFGWAVLITAVLLLLSLPVLAGAITMLLTDRNFNTSFFELAGGGDPIFIQHLFWFFGHPEVYILIVPGFGIISTVISANSSKNVFGYLGMVYAMMSIGILGFVFWSHHMYTVGLDVDTRAYFIAATLIIAVPTGIKIFSWLATCYGGSLNLTPAMLFALGFVVMFTIGGLSGVVLANASLDIAFHDTYYVVAHFHYVLSMGAVFALFSGWYFWIPKLLGLSYDLFAGKVHFWILFVGVNLTLFPQHFLGLQGMPRRIGDYPDAFAGWNLISSFGSIVSVVATWYFLNILYLQLTQGSPVSRYPWLTPQYFSDLFQHLFTRNNSSLEWCLNSPPKPHAFDCLPVQS</sequence>
<name>COX1_TRIRU</name>
<keyword id="KW-0106">Calcium</keyword>
<keyword id="KW-0186">Copper</keyword>
<keyword id="KW-0249">Electron transport</keyword>
<keyword id="KW-0349">Heme</keyword>
<keyword id="KW-0408">Iron</keyword>
<keyword id="KW-0460">Magnesium</keyword>
<keyword id="KW-0472">Membrane</keyword>
<keyword id="KW-0479">Metal-binding</keyword>
<keyword id="KW-0496">Mitochondrion</keyword>
<keyword id="KW-0999">Mitochondrion inner membrane</keyword>
<keyword id="KW-0679">Respiratory chain</keyword>
<keyword id="KW-1278">Translocase</keyword>
<keyword id="KW-0812">Transmembrane</keyword>
<keyword id="KW-1133">Transmembrane helix</keyword>
<keyword id="KW-0813">Transport</keyword>
<feature type="chain" id="PRO_0000183427" description="Cytochrome c oxidase subunit 1">
    <location>
        <begin position="1"/>
        <end position="528"/>
    </location>
</feature>
<feature type="transmembrane region" description="Helical" evidence="3">
    <location>
        <begin position="17"/>
        <end position="37"/>
    </location>
</feature>
<feature type="transmembrane region" description="Helical" evidence="3">
    <location>
        <begin position="64"/>
        <end position="84"/>
    </location>
</feature>
<feature type="transmembrane region" description="Helical" evidence="3">
    <location>
        <begin position="100"/>
        <end position="120"/>
    </location>
</feature>
<feature type="transmembrane region" description="Helical" evidence="3">
    <location>
        <begin position="146"/>
        <end position="166"/>
    </location>
</feature>
<feature type="transmembrane region" description="Helical" evidence="3">
    <location>
        <begin position="182"/>
        <end position="202"/>
    </location>
</feature>
<feature type="transmembrane region" description="Helical" evidence="3">
    <location>
        <begin position="235"/>
        <end position="255"/>
    </location>
</feature>
<feature type="transmembrane region" description="Helical" evidence="3">
    <location>
        <begin position="267"/>
        <end position="287"/>
    </location>
</feature>
<feature type="transmembrane region" description="Helical" evidence="3">
    <location>
        <begin position="305"/>
        <end position="325"/>
    </location>
</feature>
<feature type="transmembrane region" description="Helical" evidence="3">
    <location>
        <begin position="338"/>
        <end position="358"/>
    </location>
</feature>
<feature type="transmembrane region" description="Helical" evidence="3">
    <location>
        <begin position="377"/>
        <end position="397"/>
    </location>
</feature>
<feature type="transmembrane region" description="Helical" evidence="3">
    <location>
        <begin position="407"/>
        <end position="427"/>
    </location>
</feature>
<feature type="transmembrane region" description="Helical" evidence="3">
    <location>
        <begin position="452"/>
        <end position="472"/>
    </location>
</feature>
<feature type="binding site" evidence="2">
    <location>
        <position position="40"/>
    </location>
    <ligand>
        <name>Ca(2+)</name>
        <dbReference type="ChEBI" id="CHEBI:29108"/>
    </ligand>
</feature>
<feature type="binding site" evidence="2">
    <location>
        <position position="43"/>
    </location>
    <ligand>
        <name>Ca(2+)</name>
        <dbReference type="ChEBI" id="CHEBI:29108"/>
    </ligand>
</feature>
<feature type="binding site" evidence="2">
    <location>
        <position position="45"/>
    </location>
    <ligand>
        <name>Ca(2+)</name>
        <dbReference type="ChEBI" id="CHEBI:29108"/>
    </ligand>
</feature>
<feature type="binding site" description="axial binding residue" evidence="2">
    <location>
        <position position="62"/>
    </location>
    <ligand>
        <name>Fe(II)-heme a</name>
        <dbReference type="ChEBI" id="CHEBI:61715"/>
        <note>low-spin</note>
    </ligand>
    <ligandPart>
        <name>Fe</name>
        <dbReference type="ChEBI" id="CHEBI:18248"/>
    </ligandPart>
</feature>
<feature type="binding site" evidence="2">
    <location>
        <position position="241"/>
    </location>
    <ligand>
        <name>Cu cation</name>
        <dbReference type="ChEBI" id="CHEBI:23378"/>
        <label>B</label>
    </ligand>
</feature>
<feature type="binding site" evidence="1">
    <location>
        <position position="245"/>
    </location>
    <ligand>
        <name>O2</name>
        <dbReference type="ChEBI" id="CHEBI:15379"/>
    </ligand>
</feature>
<feature type="binding site" evidence="2">
    <location>
        <position position="290"/>
    </location>
    <ligand>
        <name>Cu cation</name>
        <dbReference type="ChEBI" id="CHEBI:23378"/>
        <label>B</label>
    </ligand>
</feature>
<feature type="binding site" evidence="2">
    <location>
        <position position="291"/>
    </location>
    <ligand>
        <name>Cu cation</name>
        <dbReference type="ChEBI" id="CHEBI:23378"/>
        <label>B</label>
    </ligand>
</feature>
<feature type="binding site" evidence="2">
    <location>
        <position position="368"/>
    </location>
    <ligand>
        <name>Mg(2+)</name>
        <dbReference type="ChEBI" id="CHEBI:18420"/>
        <note>ligand shared with subunit 2</note>
    </ligand>
</feature>
<feature type="binding site" evidence="2">
    <location>
        <position position="369"/>
    </location>
    <ligand>
        <name>Mg(2+)</name>
        <dbReference type="ChEBI" id="CHEBI:18420"/>
        <note>ligand shared with subunit 2</note>
    </ligand>
</feature>
<feature type="binding site" description="axial binding residue" evidence="2">
    <location>
        <position position="376"/>
    </location>
    <ligand>
        <name>heme a3</name>
        <dbReference type="ChEBI" id="CHEBI:83282"/>
        <note>high-spin</note>
    </ligand>
    <ligandPart>
        <name>Fe</name>
        <dbReference type="ChEBI" id="CHEBI:18248"/>
    </ligandPart>
</feature>
<feature type="binding site" description="axial binding residue" evidence="2">
    <location>
        <position position="378"/>
    </location>
    <ligand>
        <name>Fe(II)-heme a</name>
        <dbReference type="ChEBI" id="CHEBI:61715"/>
        <note>low-spin</note>
    </ligand>
    <ligandPart>
        <name>Fe</name>
        <dbReference type="ChEBI" id="CHEBI:18248"/>
    </ligandPart>
</feature>
<feature type="cross-link" description="1'-histidyl-3'-tyrosine (His-Tyr)" evidence="2">
    <location>
        <begin position="241"/>
        <end position="245"/>
    </location>
</feature>
<evidence type="ECO:0000250" key="1">
    <source>
        <dbReference type="UniProtKB" id="P00396"/>
    </source>
</evidence>
<evidence type="ECO:0000250" key="2">
    <source>
        <dbReference type="UniProtKB" id="P00401"/>
    </source>
</evidence>
<evidence type="ECO:0000255" key="3"/>
<evidence type="ECO:0000305" key="4"/>
<dbReference type="EC" id="7.1.1.9"/>
<dbReference type="EMBL" id="X65223">
    <property type="protein sequence ID" value="CAA46325.1"/>
    <property type="molecule type" value="Genomic_DNA"/>
</dbReference>
<dbReference type="PIR" id="S26948">
    <property type="entry name" value="S26948"/>
</dbReference>
<dbReference type="SMR" id="Q01555"/>
<dbReference type="UniPathway" id="UPA00705"/>
<dbReference type="GO" id="GO:0005743">
    <property type="term" value="C:mitochondrial inner membrane"/>
    <property type="evidence" value="ECO:0007669"/>
    <property type="project" value="UniProtKB-SubCell"/>
</dbReference>
<dbReference type="GO" id="GO:0045277">
    <property type="term" value="C:respiratory chain complex IV"/>
    <property type="evidence" value="ECO:0007669"/>
    <property type="project" value="InterPro"/>
</dbReference>
<dbReference type="GO" id="GO:0004129">
    <property type="term" value="F:cytochrome-c oxidase activity"/>
    <property type="evidence" value="ECO:0007669"/>
    <property type="project" value="UniProtKB-EC"/>
</dbReference>
<dbReference type="GO" id="GO:0020037">
    <property type="term" value="F:heme binding"/>
    <property type="evidence" value="ECO:0007669"/>
    <property type="project" value="InterPro"/>
</dbReference>
<dbReference type="GO" id="GO:0046872">
    <property type="term" value="F:metal ion binding"/>
    <property type="evidence" value="ECO:0007669"/>
    <property type="project" value="UniProtKB-KW"/>
</dbReference>
<dbReference type="GO" id="GO:0015990">
    <property type="term" value="P:electron transport coupled proton transport"/>
    <property type="evidence" value="ECO:0007669"/>
    <property type="project" value="TreeGrafter"/>
</dbReference>
<dbReference type="GO" id="GO:0006123">
    <property type="term" value="P:mitochondrial electron transport, cytochrome c to oxygen"/>
    <property type="evidence" value="ECO:0007669"/>
    <property type="project" value="TreeGrafter"/>
</dbReference>
<dbReference type="CDD" id="cd01663">
    <property type="entry name" value="Cyt_c_Oxidase_I"/>
    <property type="match status" value="1"/>
</dbReference>
<dbReference type="FunFam" id="1.20.210.10:FF:000001">
    <property type="entry name" value="Cytochrome c oxidase subunit 1"/>
    <property type="match status" value="1"/>
</dbReference>
<dbReference type="Gene3D" id="1.20.210.10">
    <property type="entry name" value="Cytochrome c oxidase-like, subunit I domain"/>
    <property type="match status" value="1"/>
</dbReference>
<dbReference type="InterPro" id="IPR023616">
    <property type="entry name" value="Cyt_c_oxase-like_su1_dom"/>
</dbReference>
<dbReference type="InterPro" id="IPR036927">
    <property type="entry name" value="Cyt_c_oxase-like_su1_sf"/>
</dbReference>
<dbReference type="InterPro" id="IPR000883">
    <property type="entry name" value="Cyt_C_Oxase_1"/>
</dbReference>
<dbReference type="InterPro" id="IPR023615">
    <property type="entry name" value="Cyt_c_Oxase_su1_BS"/>
</dbReference>
<dbReference type="InterPro" id="IPR033944">
    <property type="entry name" value="Cyt_c_oxase_su1_dom"/>
</dbReference>
<dbReference type="PANTHER" id="PTHR10422">
    <property type="entry name" value="CYTOCHROME C OXIDASE SUBUNIT 1"/>
    <property type="match status" value="1"/>
</dbReference>
<dbReference type="PANTHER" id="PTHR10422:SF18">
    <property type="entry name" value="CYTOCHROME C OXIDASE SUBUNIT 1"/>
    <property type="match status" value="1"/>
</dbReference>
<dbReference type="Pfam" id="PF00115">
    <property type="entry name" value="COX1"/>
    <property type="match status" value="1"/>
</dbReference>
<dbReference type="PRINTS" id="PR01165">
    <property type="entry name" value="CYCOXIDASEI"/>
</dbReference>
<dbReference type="SUPFAM" id="SSF81442">
    <property type="entry name" value="Cytochrome c oxidase subunit I-like"/>
    <property type="match status" value="1"/>
</dbReference>
<dbReference type="PROSITE" id="PS50855">
    <property type="entry name" value="COX1"/>
    <property type="match status" value="1"/>
</dbReference>
<dbReference type="PROSITE" id="PS00077">
    <property type="entry name" value="COX1_CUB"/>
    <property type="match status" value="1"/>
</dbReference>
<gene>
    <name type="primary">COX1</name>
</gene>
<comment type="function">
    <text evidence="2">Component of the cytochrome c oxidase, the last enzyme in the mitochondrial electron transport chain which drives oxidative phosphorylation. The respiratory chain contains 3 multisubunit complexes succinate dehydrogenase (complex II, CII), ubiquinol-cytochrome c oxidoreductase (cytochrome b-c1 complex, complex III, CIII) and cytochrome c oxidase (complex IV, CIV), that cooperate to transfer electrons derived from NADH and succinate to molecular oxygen, creating an electrochemical gradient over the inner membrane that drives transmembrane transport and the ATP synthase. Cytochrome c oxidase is the component of the respiratory chain that catalyzes the reduction of oxygen to water. Electrons originating from reduced cytochrome c in the intermembrane space (IMS) are transferred via the dinuclear copper A center (CU(A)) of subunit 2 and heme A of subunit 1 to the active site in subunit 1, a binuclear center (BNC) formed by heme A3 and copper B (CU(B)). The BNC reduces molecular oxygen to 2 water molecules using 4 electrons from cytochrome c in the IMS and 4 protons from the mitochondrial matrix.</text>
</comment>
<comment type="catalytic activity">
    <reaction evidence="2">
        <text>4 Fe(II)-[cytochrome c] + O2 + 8 H(+)(in) = 4 Fe(III)-[cytochrome c] + 2 H2O + 4 H(+)(out)</text>
        <dbReference type="Rhea" id="RHEA:11436"/>
        <dbReference type="Rhea" id="RHEA-COMP:10350"/>
        <dbReference type="Rhea" id="RHEA-COMP:14399"/>
        <dbReference type="ChEBI" id="CHEBI:15377"/>
        <dbReference type="ChEBI" id="CHEBI:15378"/>
        <dbReference type="ChEBI" id="CHEBI:15379"/>
        <dbReference type="ChEBI" id="CHEBI:29033"/>
        <dbReference type="ChEBI" id="CHEBI:29034"/>
        <dbReference type="EC" id="7.1.1.9"/>
    </reaction>
    <physiologicalReaction direction="left-to-right" evidence="2">
        <dbReference type="Rhea" id="RHEA:11437"/>
    </physiologicalReaction>
</comment>
<comment type="cofactor">
    <cofactor evidence="2">
        <name>heme</name>
        <dbReference type="ChEBI" id="CHEBI:30413"/>
    </cofactor>
    <text evidence="2">Binds 2 heme A groups non-covalently per subunit.</text>
</comment>
<comment type="cofactor">
    <cofactor evidence="2">
        <name>Cu cation</name>
        <dbReference type="ChEBI" id="CHEBI:23378"/>
    </cofactor>
    <text evidence="2">Binds a copper B center.</text>
</comment>
<comment type="pathway">
    <text evidence="2">Energy metabolism; oxidative phosphorylation.</text>
</comment>
<comment type="subunit">
    <text evidence="2">Component of the cytochrome c oxidase (complex IV, CIV), a multisubunit enzyme composed of a catalytic core of 3 subunits and several supernumerary subunits. The complex exists as a monomer or a dimer and forms supercomplexes (SCs) in the inner mitochondrial membrane with ubiquinol-cytochrome c oxidoreductase (cytochrome b-c1 complex, complex III, CIII).</text>
</comment>
<comment type="subcellular location">
    <subcellularLocation>
        <location evidence="2">Mitochondrion inner membrane</location>
        <topology evidence="2">Multi-pass membrane protein</topology>
    </subcellularLocation>
</comment>
<comment type="similarity">
    <text evidence="4">Belongs to the heme-copper respiratory oxidase family.</text>
</comment>